<accession>Q1B9C1</accession>
<gene>
    <name evidence="1" type="primary">pgk</name>
    <name type="ordered locus">Mmcs_2405</name>
</gene>
<protein>
    <recommendedName>
        <fullName evidence="1">Phosphoglycerate kinase</fullName>
        <ecNumber evidence="1">2.7.2.3</ecNumber>
    </recommendedName>
</protein>
<organism>
    <name type="scientific">Mycobacterium sp. (strain MCS)</name>
    <dbReference type="NCBI Taxonomy" id="164756"/>
    <lineage>
        <taxon>Bacteria</taxon>
        <taxon>Bacillati</taxon>
        <taxon>Actinomycetota</taxon>
        <taxon>Actinomycetes</taxon>
        <taxon>Mycobacteriales</taxon>
        <taxon>Mycobacteriaceae</taxon>
        <taxon>Mycobacterium</taxon>
    </lineage>
</organism>
<dbReference type="EC" id="2.7.2.3" evidence="1"/>
<dbReference type="EMBL" id="CP000384">
    <property type="protein sequence ID" value="ABG08513.1"/>
    <property type="molecule type" value="Genomic_DNA"/>
</dbReference>
<dbReference type="SMR" id="Q1B9C1"/>
<dbReference type="KEGG" id="mmc:Mmcs_2405"/>
<dbReference type="HOGENOM" id="CLU_025427_0_2_11"/>
<dbReference type="BioCyc" id="MSP164756:G1G6O-2456-MONOMER"/>
<dbReference type="UniPathway" id="UPA00109">
    <property type="reaction ID" value="UER00185"/>
</dbReference>
<dbReference type="GO" id="GO:0005829">
    <property type="term" value="C:cytosol"/>
    <property type="evidence" value="ECO:0007669"/>
    <property type="project" value="TreeGrafter"/>
</dbReference>
<dbReference type="GO" id="GO:0043531">
    <property type="term" value="F:ADP binding"/>
    <property type="evidence" value="ECO:0007669"/>
    <property type="project" value="TreeGrafter"/>
</dbReference>
<dbReference type="GO" id="GO:0005524">
    <property type="term" value="F:ATP binding"/>
    <property type="evidence" value="ECO:0007669"/>
    <property type="project" value="UniProtKB-KW"/>
</dbReference>
<dbReference type="GO" id="GO:0004618">
    <property type="term" value="F:phosphoglycerate kinase activity"/>
    <property type="evidence" value="ECO:0007669"/>
    <property type="project" value="UniProtKB-UniRule"/>
</dbReference>
<dbReference type="GO" id="GO:0006094">
    <property type="term" value="P:gluconeogenesis"/>
    <property type="evidence" value="ECO:0007669"/>
    <property type="project" value="TreeGrafter"/>
</dbReference>
<dbReference type="GO" id="GO:0006096">
    <property type="term" value="P:glycolytic process"/>
    <property type="evidence" value="ECO:0007669"/>
    <property type="project" value="UniProtKB-UniRule"/>
</dbReference>
<dbReference type="CDD" id="cd00318">
    <property type="entry name" value="Phosphoglycerate_kinase"/>
    <property type="match status" value="1"/>
</dbReference>
<dbReference type="FunFam" id="3.40.50.1260:FF:000006">
    <property type="entry name" value="Phosphoglycerate kinase"/>
    <property type="match status" value="1"/>
</dbReference>
<dbReference type="FunFam" id="3.40.50.1260:FF:000031">
    <property type="entry name" value="Phosphoglycerate kinase 1"/>
    <property type="match status" value="1"/>
</dbReference>
<dbReference type="Gene3D" id="3.40.50.1260">
    <property type="entry name" value="Phosphoglycerate kinase, N-terminal domain"/>
    <property type="match status" value="2"/>
</dbReference>
<dbReference type="HAMAP" id="MF_00145">
    <property type="entry name" value="Phosphoglyc_kinase"/>
    <property type="match status" value="1"/>
</dbReference>
<dbReference type="InterPro" id="IPR001576">
    <property type="entry name" value="Phosphoglycerate_kinase"/>
</dbReference>
<dbReference type="InterPro" id="IPR015911">
    <property type="entry name" value="Phosphoglycerate_kinase_CS"/>
</dbReference>
<dbReference type="InterPro" id="IPR015824">
    <property type="entry name" value="Phosphoglycerate_kinase_N"/>
</dbReference>
<dbReference type="InterPro" id="IPR036043">
    <property type="entry name" value="Phosphoglycerate_kinase_sf"/>
</dbReference>
<dbReference type="PANTHER" id="PTHR11406">
    <property type="entry name" value="PHOSPHOGLYCERATE KINASE"/>
    <property type="match status" value="1"/>
</dbReference>
<dbReference type="PANTHER" id="PTHR11406:SF23">
    <property type="entry name" value="PHOSPHOGLYCERATE KINASE 1, CHLOROPLASTIC-RELATED"/>
    <property type="match status" value="1"/>
</dbReference>
<dbReference type="Pfam" id="PF00162">
    <property type="entry name" value="PGK"/>
    <property type="match status" value="1"/>
</dbReference>
<dbReference type="PIRSF" id="PIRSF000724">
    <property type="entry name" value="Pgk"/>
    <property type="match status" value="1"/>
</dbReference>
<dbReference type="PRINTS" id="PR00477">
    <property type="entry name" value="PHGLYCKINASE"/>
</dbReference>
<dbReference type="SUPFAM" id="SSF53748">
    <property type="entry name" value="Phosphoglycerate kinase"/>
    <property type="match status" value="1"/>
</dbReference>
<dbReference type="PROSITE" id="PS00111">
    <property type="entry name" value="PGLYCERATE_KINASE"/>
    <property type="match status" value="1"/>
</dbReference>
<feature type="chain" id="PRO_1000009634" description="Phosphoglycerate kinase">
    <location>
        <begin position="1"/>
        <end position="407"/>
    </location>
</feature>
<feature type="binding site" evidence="1">
    <location>
        <begin position="27"/>
        <end position="29"/>
    </location>
    <ligand>
        <name>substrate</name>
    </ligand>
</feature>
<feature type="binding site" evidence="1">
    <location>
        <position position="43"/>
    </location>
    <ligand>
        <name>substrate</name>
    </ligand>
</feature>
<feature type="binding site" evidence="1">
    <location>
        <begin position="66"/>
        <end position="69"/>
    </location>
    <ligand>
        <name>substrate</name>
    </ligand>
</feature>
<feature type="binding site" evidence="1">
    <location>
        <position position="125"/>
    </location>
    <ligand>
        <name>substrate</name>
    </ligand>
</feature>
<feature type="binding site" evidence="1">
    <location>
        <position position="165"/>
    </location>
    <ligand>
        <name>substrate</name>
    </ligand>
</feature>
<feature type="binding site" evidence="1">
    <location>
        <position position="215"/>
    </location>
    <ligand>
        <name>ATP</name>
        <dbReference type="ChEBI" id="CHEBI:30616"/>
    </ligand>
</feature>
<feature type="binding site" evidence="1">
    <location>
        <position position="303"/>
    </location>
    <ligand>
        <name>ATP</name>
        <dbReference type="ChEBI" id="CHEBI:30616"/>
    </ligand>
</feature>
<feature type="binding site" evidence="1">
    <location>
        <position position="334"/>
    </location>
    <ligand>
        <name>ATP</name>
        <dbReference type="ChEBI" id="CHEBI:30616"/>
    </ligand>
</feature>
<feature type="binding site" evidence="1">
    <location>
        <begin position="363"/>
        <end position="366"/>
    </location>
    <ligand>
        <name>ATP</name>
        <dbReference type="ChEBI" id="CHEBI:30616"/>
    </ligand>
</feature>
<sequence>MAVKTLEDLLNDGDREIAGRGVLVRSDLNVPLDDNGAITDPGRIIASVPTLEALAEAGAKVIVTAHLGRPKGGPDPKYSLKPVAAALSEKLGRHVQLAGDVVGTDALARAEGLTDGDVLLLENIRFDPRETSKDDGERRKLAEALVELVGDDGAFVSDGFGVVHRKQASVYDIATLLPHYAGTLVAAEVKVLEQLTSSTDRPYAVVLGGSKVSDKLAVIESLAKKADSLVIGGGMCFTFLASQGVSVGKSLVQPEMIDTCRELLDTYGDVIHLPVDIVVAPEFSADAEPETVAADRIPEDKMGLDIGPESVKRFTNLLSNARTVFWNGPMGVFEFPAFAAGTKGVAEAIIGATAKGAFSVVGGGDSAAAVRQLGLAEDGFSHISTGGGASLEYLEGKELPGIQVLES</sequence>
<name>PGK_MYCSS</name>
<comment type="catalytic activity">
    <reaction evidence="1">
        <text>(2R)-3-phosphoglycerate + ATP = (2R)-3-phospho-glyceroyl phosphate + ADP</text>
        <dbReference type="Rhea" id="RHEA:14801"/>
        <dbReference type="ChEBI" id="CHEBI:30616"/>
        <dbReference type="ChEBI" id="CHEBI:57604"/>
        <dbReference type="ChEBI" id="CHEBI:58272"/>
        <dbReference type="ChEBI" id="CHEBI:456216"/>
        <dbReference type="EC" id="2.7.2.3"/>
    </reaction>
</comment>
<comment type="pathway">
    <text evidence="1">Carbohydrate degradation; glycolysis; pyruvate from D-glyceraldehyde 3-phosphate: step 2/5.</text>
</comment>
<comment type="subunit">
    <text evidence="1">Monomer.</text>
</comment>
<comment type="subcellular location">
    <subcellularLocation>
        <location evidence="1">Cytoplasm</location>
    </subcellularLocation>
</comment>
<comment type="similarity">
    <text evidence="1">Belongs to the phosphoglycerate kinase family.</text>
</comment>
<keyword id="KW-0067">ATP-binding</keyword>
<keyword id="KW-0963">Cytoplasm</keyword>
<keyword id="KW-0324">Glycolysis</keyword>
<keyword id="KW-0418">Kinase</keyword>
<keyword id="KW-0547">Nucleotide-binding</keyword>
<keyword id="KW-0808">Transferase</keyword>
<evidence type="ECO:0000255" key="1">
    <source>
        <dbReference type="HAMAP-Rule" id="MF_00145"/>
    </source>
</evidence>
<reference key="1">
    <citation type="submission" date="2006-06" db="EMBL/GenBank/DDBJ databases">
        <title>Complete sequence of chromosome of Mycobacterium sp. MCS.</title>
        <authorList>
            <consortium name="US DOE Joint Genome Institute"/>
            <person name="Copeland A."/>
            <person name="Lucas S."/>
            <person name="Lapidus A."/>
            <person name="Barry K."/>
            <person name="Detter J.C."/>
            <person name="Glavina del Rio T."/>
            <person name="Hammon N."/>
            <person name="Israni S."/>
            <person name="Dalin E."/>
            <person name="Tice H."/>
            <person name="Pitluck S."/>
            <person name="Martinez M."/>
            <person name="Schmutz J."/>
            <person name="Larimer F."/>
            <person name="Land M."/>
            <person name="Hauser L."/>
            <person name="Kyrpides N."/>
            <person name="Kim E."/>
            <person name="Miller C.D."/>
            <person name="Hughes J.E."/>
            <person name="Anderson A.J."/>
            <person name="Sims R.C."/>
            <person name="Richardson P."/>
        </authorList>
    </citation>
    <scope>NUCLEOTIDE SEQUENCE [LARGE SCALE GENOMIC DNA]</scope>
    <source>
        <strain>MCS</strain>
    </source>
</reference>
<proteinExistence type="inferred from homology"/>